<accession>A8FXA1</accession>
<comment type="function">
    <text evidence="1">Chaperone involved in the maturation of iron-sulfur cluster-containing proteins. Has a low intrinsic ATPase activity which is markedly stimulated by HscB.</text>
</comment>
<comment type="similarity">
    <text evidence="1">Belongs to the heat shock protein 70 family.</text>
</comment>
<proteinExistence type="inferred from homology"/>
<name>HSCA_SHESH</name>
<keyword id="KW-0067">ATP-binding</keyword>
<keyword id="KW-0143">Chaperone</keyword>
<keyword id="KW-0547">Nucleotide-binding</keyword>
<keyword id="KW-1185">Reference proteome</keyword>
<reference key="1">
    <citation type="submission" date="2007-08" db="EMBL/GenBank/DDBJ databases">
        <title>Complete sequence of Shewanella sediminis HAW-EB3.</title>
        <authorList>
            <consortium name="US DOE Joint Genome Institute"/>
            <person name="Copeland A."/>
            <person name="Lucas S."/>
            <person name="Lapidus A."/>
            <person name="Barry K."/>
            <person name="Glavina del Rio T."/>
            <person name="Dalin E."/>
            <person name="Tice H."/>
            <person name="Pitluck S."/>
            <person name="Chertkov O."/>
            <person name="Brettin T."/>
            <person name="Bruce D."/>
            <person name="Detter J.C."/>
            <person name="Han C."/>
            <person name="Schmutz J."/>
            <person name="Larimer F."/>
            <person name="Land M."/>
            <person name="Hauser L."/>
            <person name="Kyrpides N."/>
            <person name="Kim E."/>
            <person name="Zhao J.-S."/>
            <person name="Richardson P."/>
        </authorList>
    </citation>
    <scope>NUCLEOTIDE SEQUENCE [LARGE SCALE GENOMIC DNA]</scope>
    <source>
        <strain>HAW-EB3</strain>
    </source>
</reference>
<dbReference type="EMBL" id="CP000821">
    <property type="protein sequence ID" value="ABV37474.1"/>
    <property type="molecule type" value="Genomic_DNA"/>
</dbReference>
<dbReference type="RefSeq" id="WP_012143204.1">
    <property type="nucleotide sequence ID" value="NC_009831.1"/>
</dbReference>
<dbReference type="SMR" id="A8FXA1"/>
<dbReference type="STRING" id="425104.Ssed_2867"/>
<dbReference type="KEGG" id="sse:Ssed_2867"/>
<dbReference type="eggNOG" id="COG0443">
    <property type="taxonomic scope" value="Bacteria"/>
</dbReference>
<dbReference type="HOGENOM" id="CLU_005965_2_1_6"/>
<dbReference type="OrthoDB" id="9766019at2"/>
<dbReference type="Proteomes" id="UP000002015">
    <property type="component" value="Chromosome"/>
</dbReference>
<dbReference type="GO" id="GO:0005524">
    <property type="term" value="F:ATP binding"/>
    <property type="evidence" value="ECO:0007669"/>
    <property type="project" value="UniProtKB-KW"/>
</dbReference>
<dbReference type="GO" id="GO:0016887">
    <property type="term" value="F:ATP hydrolysis activity"/>
    <property type="evidence" value="ECO:0007669"/>
    <property type="project" value="UniProtKB-UniRule"/>
</dbReference>
<dbReference type="GO" id="GO:0140662">
    <property type="term" value="F:ATP-dependent protein folding chaperone"/>
    <property type="evidence" value="ECO:0007669"/>
    <property type="project" value="InterPro"/>
</dbReference>
<dbReference type="GO" id="GO:0051082">
    <property type="term" value="F:unfolded protein binding"/>
    <property type="evidence" value="ECO:0007669"/>
    <property type="project" value="InterPro"/>
</dbReference>
<dbReference type="GO" id="GO:0016226">
    <property type="term" value="P:iron-sulfur cluster assembly"/>
    <property type="evidence" value="ECO:0007669"/>
    <property type="project" value="InterPro"/>
</dbReference>
<dbReference type="FunFam" id="3.30.420.40:FF:000046">
    <property type="entry name" value="Chaperone protein HscA"/>
    <property type="match status" value="1"/>
</dbReference>
<dbReference type="FunFam" id="2.60.34.10:FF:000005">
    <property type="entry name" value="Chaperone protein HscA homolog"/>
    <property type="match status" value="1"/>
</dbReference>
<dbReference type="FunFam" id="3.30.420.40:FF:000020">
    <property type="entry name" value="Chaperone protein HscA homolog"/>
    <property type="match status" value="1"/>
</dbReference>
<dbReference type="Gene3D" id="1.20.1270.10">
    <property type="match status" value="1"/>
</dbReference>
<dbReference type="Gene3D" id="3.30.420.40">
    <property type="match status" value="2"/>
</dbReference>
<dbReference type="Gene3D" id="3.90.640.10">
    <property type="entry name" value="Actin, Chain A, domain 4"/>
    <property type="match status" value="1"/>
</dbReference>
<dbReference type="Gene3D" id="2.60.34.10">
    <property type="entry name" value="Substrate Binding Domain Of DNAk, Chain A, domain 1"/>
    <property type="match status" value="1"/>
</dbReference>
<dbReference type="HAMAP" id="MF_00679">
    <property type="entry name" value="HscA"/>
    <property type="match status" value="1"/>
</dbReference>
<dbReference type="InterPro" id="IPR043129">
    <property type="entry name" value="ATPase_NBD"/>
</dbReference>
<dbReference type="InterPro" id="IPR018181">
    <property type="entry name" value="Heat_shock_70_CS"/>
</dbReference>
<dbReference type="InterPro" id="IPR029048">
    <property type="entry name" value="HSP70_C_sf"/>
</dbReference>
<dbReference type="InterPro" id="IPR029047">
    <property type="entry name" value="HSP70_peptide-bd_sf"/>
</dbReference>
<dbReference type="InterPro" id="IPR013126">
    <property type="entry name" value="Hsp_70_fam"/>
</dbReference>
<dbReference type="InterPro" id="IPR010236">
    <property type="entry name" value="ISC_FeS_clus_asmbl_HscA"/>
</dbReference>
<dbReference type="NCBIfam" id="TIGR01991">
    <property type="entry name" value="HscA"/>
    <property type="match status" value="1"/>
</dbReference>
<dbReference type="NCBIfam" id="NF003520">
    <property type="entry name" value="PRK05183.1"/>
    <property type="match status" value="1"/>
</dbReference>
<dbReference type="PANTHER" id="PTHR19375">
    <property type="entry name" value="HEAT SHOCK PROTEIN 70KDA"/>
    <property type="match status" value="1"/>
</dbReference>
<dbReference type="Pfam" id="PF00012">
    <property type="entry name" value="HSP70"/>
    <property type="match status" value="1"/>
</dbReference>
<dbReference type="PRINTS" id="PR00301">
    <property type="entry name" value="HEATSHOCK70"/>
</dbReference>
<dbReference type="SUPFAM" id="SSF53067">
    <property type="entry name" value="Actin-like ATPase domain"/>
    <property type="match status" value="2"/>
</dbReference>
<dbReference type="SUPFAM" id="SSF100934">
    <property type="entry name" value="Heat shock protein 70kD (HSP70), C-terminal subdomain"/>
    <property type="match status" value="1"/>
</dbReference>
<dbReference type="SUPFAM" id="SSF100920">
    <property type="entry name" value="Heat shock protein 70kD (HSP70), peptide-binding domain"/>
    <property type="match status" value="1"/>
</dbReference>
<dbReference type="PROSITE" id="PS00297">
    <property type="entry name" value="HSP70_1"/>
    <property type="match status" value="1"/>
</dbReference>
<dbReference type="PROSITE" id="PS00329">
    <property type="entry name" value="HSP70_2"/>
    <property type="match status" value="1"/>
</dbReference>
<organism>
    <name type="scientific">Shewanella sediminis (strain HAW-EB3)</name>
    <dbReference type="NCBI Taxonomy" id="425104"/>
    <lineage>
        <taxon>Bacteria</taxon>
        <taxon>Pseudomonadati</taxon>
        <taxon>Pseudomonadota</taxon>
        <taxon>Gammaproteobacteria</taxon>
        <taxon>Alteromonadales</taxon>
        <taxon>Shewanellaceae</taxon>
        <taxon>Shewanella</taxon>
    </lineage>
</organism>
<gene>
    <name evidence="1" type="primary">hscA</name>
    <name type="ordered locus">Ssed_2867</name>
</gene>
<evidence type="ECO:0000255" key="1">
    <source>
        <dbReference type="HAMAP-Rule" id="MF_00679"/>
    </source>
</evidence>
<feature type="chain" id="PRO_1000082990" description="Chaperone protein HscA homolog">
    <location>
        <begin position="1"/>
        <end position="620"/>
    </location>
</feature>
<protein>
    <recommendedName>
        <fullName evidence="1">Chaperone protein HscA homolog</fullName>
    </recommendedName>
</protein>
<sequence length="620" mass="65892">MALLQIAEPGQTAAPHQHRLAVGIDLGTTNSLVAAVRSGVADTLPDENARHSLPSIVRYTDTGIEAGFEAEAHSAKDPQNTIVSVKRFMGRSLADIQSGIQDLPYRFQASENGLPLFATEQGTVNPVQISSEILKPLISRAESTLGGDLEGIVITVPAYFDDAQRQGTKDAAALLGVKVLRLLNEPTAAAIAYGLDSGQEGVIAIYDLGGGTFDISILRLNKGVFEVLATGGDSALGGDDFDHLLHHHLLQEWQIDAPSASVSRQLLIESRRVKEVLTDESEVTATLLLDDGTTLTHVVTKSLFDSLITSLVKKTVASCRRALRDAGIKADEVLETVLVGGSTRVPLVRELVEGFFGKAPLTSIDPDRVVAIGAAIQADILVGNKPESDLLLLDVLPLSLGIETMGGLVEKVVSRNTTIPVAKAQEFTTFKDGQTAMAFHVVQGERELVDDCRSLARFTLKGIPPLAAGAAHIRVTFQVDADGLLSVTAMEKSTGVQSSIQVKPSFGLTDEEIGSMLKDSMANAKDDIARRMLAEQQVEAARVLETLSAALAKDGELLTADERNAIEQSMAVLVEVGGQDDADAIEKAIEALDASTQDFAAKRMDNSIKLALKGQSVDSI</sequence>